<keyword id="KW-1003">Cell membrane</keyword>
<keyword id="KW-0407">Ion channel</keyword>
<keyword id="KW-0406">Ion transport</keyword>
<keyword id="KW-0472">Membrane</keyword>
<keyword id="KW-0479">Metal-binding</keyword>
<keyword id="KW-1185">Reference proteome</keyword>
<keyword id="KW-0915">Sodium</keyword>
<keyword id="KW-0812">Transmembrane</keyword>
<keyword id="KW-1133">Transmembrane helix</keyword>
<keyword id="KW-0813">Transport</keyword>
<comment type="function">
    <text evidence="1">Fluoride-specific ion channel. Important for reducing fluoride concentration in the cell, thus reducing its toxicity.</text>
</comment>
<comment type="catalytic activity">
    <reaction evidence="1">
        <text>fluoride(in) = fluoride(out)</text>
        <dbReference type="Rhea" id="RHEA:76159"/>
        <dbReference type="ChEBI" id="CHEBI:17051"/>
    </reaction>
    <physiologicalReaction direction="left-to-right" evidence="1">
        <dbReference type="Rhea" id="RHEA:76160"/>
    </physiologicalReaction>
</comment>
<comment type="activity regulation">
    <text evidence="1">Na(+) is not transported, but it plays an essential structural role and its presence is essential for fluoride channel function.</text>
</comment>
<comment type="subcellular location">
    <subcellularLocation>
        <location evidence="1">Cell membrane</location>
        <topology evidence="1">Multi-pass membrane protein</topology>
    </subcellularLocation>
</comment>
<comment type="similarity">
    <text evidence="1">Belongs to the fluoride channel Fluc/FEX (TC 1.A.43) family.</text>
</comment>
<reference key="1">
    <citation type="journal article" date="2002" name="Nature">
        <title>Complete genome sequence of the model actinomycete Streptomyces coelicolor A3(2).</title>
        <authorList>
            <person name="Bentley S.D."/>
            <person name="Chater K.F."/>
            <person name="Cerdeno-Tarraga A.-M."/>
            <person name="Challis G.L."/>
            <person name="Thomson N.R."/>
            <person name="James K.D."/>
            <person name="Harris D.E."/>
            <person name="Quail M.A."/>
            <person name="Kieser H."/>
            <person name="Harper D."/>
            <person name="Bateman A."/>
            <person name="Brown S."/>
            <person name="Chandra G."/>
            <person name="Chen C.W."/>
            <person name="Collins M."/>
            <person name="Cronin A."/>
            <person name="Fraser A."/>
            <person name="Goble A."/>
            <person name="Hidalgo J."/>
            <person name="Hornsby T."/>
            <person name="Howarth S."/>
            <person name="Huang C.-H."/>
            <person name="Kieser T."/>
            <person name="Larke L."/>
            <person name="Murphy L.D."/>
            <person name="Oliver K."/>
            <person name="O'Neil S."/>
            <person name="Rabbinowitsch E."/>
            <person name="Rajandream M.A."/>
            <person name="Rutherford K.M."/>
            <person name="Rutter S."/>
            <person name="Seeger K."/>
            <person name="Saunders D."/>
            <person name="Sharp S."/>
            <person name="Squares R."/>
            <person name="Squares S."/>
            <person name="Taylor K."/>
            <person name="Warren T."/>
            <person name="Wietzorrek A."/>
            <person name="Woodward J.R."/>
            <person name="Barrell B.G."/>
            <person name="Parkhill J."/>
            <person name="Hopwood D.A."/>
        </authorList>
    </citation>
    <scope>NUCLEOTIDE SEQUENCE [LARGE SCALE GENOMIC DNA]</scope>
    <source>
        <strain>ATCC BAA-471 / A3(2) / M145</strain>
    </source>
</reference>
<name>FLUC1_STRCO</name>
<gene>
    <name evidence="1" type="primary">fluC1</name>
    <name evidence="1" type="synonym">crcB1</name>
    <name type="ordered locus">SCO7044</name>
    <name type="ORF">SC4G1.10</name>
</gene>
<sequence>MTVPRTGRPGGIRAAAPSRSGWRTQAPVVAVVALGGGTGAAARYAASLWWPTPAGGFPWTTFGVNAVGCAVIGVFMVVITEVRPAHRLVRPFFGTGVLGGFTTFSTYAVDSRSLFADGRLPTGLAYLAATPLAALTAVWLAAWAARRVLKWRQS</sequence>
<dbReference type="EMBL" id="AL939130">
    <property type="protein sequence ID" value="CAC01542.1"/>
    <property type="molecule type" value="Genomic_DNA"/>
</dbReference>
<dbReference type="RefSeq" id="NP_631106.1">
    <property type="nucleotide sequence ID" value="NC_003888.3"/>
</dbReference>
<dbReference type="SMR" id="Q9FC39"/>
<dbReference type="FunCoup" id="Q9FC39">
    <property type="interactions" value="2"/>
</dbReference>
<dbReference type="STRING" id="100226.gene:17764704"/>
<dbReference type="PaxDb" id="100226-SCO7044"/>
<dbReference type="KEGG" id="sco:SCO7044"/>
<dbReference type="PATRIC" id="fig|100226.15.peg.7148"/>
<dbReference type="eggNOG" id="COG0239">
    <property type="taxonomic scope" value="Bacteria"/>
</dbReference>
<dbReference type="HOGENOM" id="CLU_114342_1_0_11"/>
<dbReference type="InParanoid" id="Q9FC39"/>
<dbReference type="OrthoDB" id="4408652at2"/>
<dbReference type="Proteomes" id="UP000001973">
    <property type="component" value="Chromosome"/>
</dbReference>
<dbReference type="GO" id="GO:0005886">
    <property type="term" value="C:plasma membrane"/>
    <property type="evidence" value="ECO:0000318"/>
    <property type="project" value="GO_Central"/>
</dbReference>
<dbReference type="GO" id="GO:0062054">
    <property type="term" value="F:fluoride channel activity"/>
    <property type="evidence" value="ECO:0007669"/>
    <property type="project" value="UniProtKB-UniRule"/>
</dbReference>
<dbReference type="GO" id="GO:1903425">
    <property type="term" value="F:fluoride transmembrane transporter activity"/>
    <property type="evidence" value="ECO:0000318"/>
    <property type="project" value="GO_Central"/>
</dbReference>
<dbReference type="GO" id="GO:0046872">
    <property type="term" value="F:metal ion binding"/>
    <property type="evidence" value="ECO:0007669"/>
    <property type="project" value="UniProtKB-KW"/>
</dbReference>
<dbReference type="GO" id="GO:0140114">
    <property type="term" value="P:cellular detoxification of fluoride"/>
    <property type="evidence" value="ECO:0007669"/>
    <property type="project" value="UniProtKB-UniRule"/>
</dbReference>
<dbReference type="GO" id="GO:1903424">
    <property type="term" value="P:fluoride transmembrane transport"/>
    <property type="evidence" value="ECO:0000318"/>
    <property type="project" value="GO_Central"/>
</dbReference>
<dbReference type="HAMAP" id="MF_00454">
    <property type="entry name" value="FluC"/>
    <property type="match status" value="1"/>
</dbReference>
<dbReference type="InterPro" id="IPR003691">
    <property type="entry name" value="FluC"/>
</dbReference>
<dbReference type="NCBIfam" id="TIGR00494">
    <property type="entry name" value="crcB"/>
    <property type="match status" value="1"/>
</dbReference>
<dbReference type="PANTHER" id="PTHR28259">
    <property type="entry name" value="FLUORIDE EXPORT PROTEIN 1-RELATED"/>
    <property type="match status" value="1"/>
</dbReference>
<dbReference type="PANTHER" id="PTHR28259:SF1">
    <property type="entry name" value="FLUORIDE EXPORT PROTEIN 1-RELATED"/>
    <property type="match status" value="1"/>
</dbReference>
<dbReference type="Pfam" id="PF02537">
    <property type="entry name" value="CRCB"/>
    <property type="match status" value="1"/>
</dbReference>
<organism>
    <name type="scientific">Streptomyces coelicolor (strain ATCC BAA-471 / A3(2) / M145)</name>
    <dbReference type="NCBI Taxonomy" id="100226"/>
    <lineage>
        <taxon>Bacteria</taxon>
        <taxon>Bacillati</taxon>
        <taxon>Actinomycetota</taxon>
        <taxon>Actinomycetes</taxon>
        <taxon>Kitasatosporales</taxon>
        <taxon>Streptomycetaceae</taxon>
        <taxon>Streptomyces</taxon>
        <taxon>Streptomyces albidoflavus group</taxon>
    </lineage>
</organism>
<evidence type="ECO:0000255" key="1">
    <source>
        <dbReference type="HAMAP-Rule" id="MF_00454"/>
    </source>
</evidence>
<proteinExistence type="inferred from homology"/>
<accession>Q9FC39</accession>
<feature type="chain" id="PRO_0000110192" description="Fluoride-specific ion channel FluC 1">
    <location>
        <begin position="1"/>
        <end position="154"/>
    </location>
</feature>
<feature type="transmembrane region" description="Helical" evidence="1">
    <location>
        <begin position="28"/>
        <end position="48"/>
    </location>
</feature>
<feature type="transmembrane region" description="Helical" evidence="1">
    <location>
        <begin position="59"/>
        <end position="79"/>
    </location>
</feature>
<feature type="transmembrane region" description="Helical" evidence="1">
    <location>
        <begin position="91"/>
        <end position="111"/>
    </location>
</feature>
<feature type="transmembrane region" description="Helical" evidence="1">
    <location>
        <begin position="124"/>
        <end position="144"/>
    </location>
</feature>
<feature type="binding site" evidence="1">
    <location>
        <position position="99"/>
    </location>
    <ligand>
        <name>Na(+)</name>
        <dbReference type="ChEBI" id="CHEBI:29101"/>
        <note>structural</note>
    </ligand>
</feature>
<feature type="binding site" evidence="1">
    <location>
        <position position="102"/>
    </location>
    <ligand>
        <name>Na(+)</name>
        <dbReference type="ChEBI" id="CHEBI:29101"/>
        <note>structural</note>
    </ligand>
</feature>
<protein>
    <recommendedName>
        <fullName evidence="1">Fluoride-specific ion channel FluC 1</fullName>
    </recommendedName>
</protein>